<organism>
    <name type="scientific">Rhodopseudomonas palustris (strain ATCC BAA-98 / CGA009)</name>
    <dbReference type="NCBI Taxonomy" id="258594"/>
    <lineage>
        <taxon>Bacteria</taxon>
        <taxon>Pseudomonadati</taxon>
        <taxon>Pseudomonadota</taxon>
        <taxon>Alphaproteobacteria</taxon>
        <taxon>Hyphomicrobiales</taxon>
        <taxon>Nitrobacteraceae</taxon>
        <taxon>Rhodopseudomonas</taxon>
    </lineage>
</organism>
<gene>
    <name evidence="2" type="primary">trmB</name>
    <name type="ordered locus">RPA0442</name>
</gene>
<dbReference type="EC" id="2.1.1.33" evidence="2"/>
<dbReference type="EMBL" id="BX572594">
    <property type="protein sequence ID" value="CAE25886.1"/>
    <property type="molecule type" value="Genomic_DNA"/>
</dbReference>
<dbReference type="SMR" id="Q6NCM9"/>
<dbReference type="STRING" id="258594.RPA0442"/>
<dbReference type="eggNOG" id="COG0220">
    <property type="taxonomic scope" value="Bacteria"/>
</dbReference>
<dbReference type="HOGENOM" id="CLU_050910_0_3_5"/>
<dbReference type="PhylomeDB" id="Q6NCM9"/>
<dbReference type="UniPathway" id="UPA00989"/>
<dbReference type="GO" id="GO:0043527">
    <property type="term" value="C:tRNA methyltransferase complex"/>
    <property type="evidence" value="ECO:0007669"/>
    <property type="project" value="TreeGrafter"/>
</dbReference>
<dbReference type="GO" id="GO:0008176">
    <property type="term" value="F:tRNA (guanine(46)-N7)-methyltransferase activity"/>
    <property type="evidence" value="ECO:0007669"/>
    <property type="project" value="UniProtKB-UniRule"/>
</dbReference>
<dbReference type="Gene3D" id="3.40.50.150">
    <property type="entry name" value="Vaccinia Virus protein VP39"/>
    <property type="match status" value="1"/>
</dbReference>
<dbReference type="HAMAP" id="MF_01057">
    <property type="entry name" value="tRNA_methyltr_TrmB"/>
    <property type="match status" value="1"/>
</dbReference>
<dbReference type="InterPro" id="IPR029063">
    <property type="entry name" value="SAM-dependent_MTases_sf"/>
</dbReference>
<dbReference type="InterPro" id="IPR003358">
    <property type="entry name" value="tRNA_(Gua-N-7)_MeTrfase_Trmb"/>
</dbReference>
<dbReference type="InterPro" id="IPR055361">
    <property type="entry name" value="tRNA_methyltr_TrmB_bact"/>
</dbReference>
<dbReference type="PANTHER" id="PTHR23417">
    <property type="entry name" value="3-DEOXY-D-MANNO-OCTULOSONIC-ACID TRANSFERASE/TRNA GUANINE-N 7 - -METHYLTRANSFERASE"/>
    <property type="match status" value="1"/>
</dbReference>
<dbReference type="PANTHER" id="PTHR23417:SF14">
    <property type="entry name" value="PENTACOTRIPEPTIDE-REPEAT REGION OF PRORP DOMAIN-CONTAINING PROTEIN"/>
    <property type="match status" value="1"/>
</dbReference>
<dbReference type="Pfam" id="PF02390">
    <property type="entry name" value="Methyltransf_4"/>
    <property type="match status" value="1"/>
</dbReference>
<dbReference type="SUPFAM" id="SSF53335">
    <property type="entry name" value="S-adenosyl-L-methionine-dependent methyltransferases"/>
    <property type="match status" value="1"/>
</dbReference>
<dbReference type="PROSITE" id="PS51625">
    <property type="entry name" value="SAM_MT_TRMB"/>
    <property type="match status" value="1"/>
</dbReference>
<proteinExistence type="inferred from homology"/>
<sequence>MAVLYAGRPVQKCERSRLMFNIDQPDSAPDNEDHDGDVVMHGQGSFFGRRKGHKLRAHQADLIENLLPHLSLQIDSPAPEPLTTLFDPPVEHMRLEIGFGGGEHLIAEALAHPDTGFIGAEPYVNGMAKILARIEAENIRNIRLFAGDASELLAWVPAGSLARIDLIHPDPWPKRRHWKRRFVQDATVAAMARALTPHGEFRFVCDIDGYTAWTLAHLLRAPCFDWLAQRADDWRKPWPNYTMTRYGRKAEREGRRANYLRFERL</sequence>
<keyword id="KW-0489">Methyltransferase</keyword>
<keyword id="KW-0949">S-adenosyl-L-methionine</keyword>
<keyword id="KW-0808">Transferase</keyword>
<keyword id="KW-0819">tRNA processing</keyword>
<feature type="chain" id="PRO_0000171383" description="tRNA (guanine-N(7)-)-methyltransferase">
    <location>
        <begin position="1"/>
        <end position="265"/>
    </location>
</feature>
<feature type="active site" evidence="1">
    <location>
        <position position="170"/>
    </location>
</feature>
<feature type="binding site" evidence="2">
    <location>
        <position position="96"/>
    </location>
    <ligand>
        <name>S-adenosyl-L-methionine</name>
        <dbReference type="ChEBI" id="CHEBI:59789"/>
    </ligand>
</feature>
<feature type="binding site" evidence="2">
    <location>
        <position position="121"/>
    </location>
    <ligand>
        <name>S-adenosyl-L-methionine</name>
        <dbReference type="ChEBI" id="CHEBI:59789"/>
    </ligand>
</feature>
<feature type="binding site" evidence="2">
    <location>
        <position position="148"/>
    </location>
    <ligand>
        <name>S-adenosyl-L-methionine</name>
        <dbReference type="ChEBI" id="CHEBI:59789"/>
    </ligand>
</feature>
<feature type="binding site" evidence="2">
    <location>
        <position position="170"/>
    </location>
    <ligand>
        <name>S-adenosyl-L-methionine</name>
        <dbReference type="ChEBI" id="CHEBI:59789"/>
    </ligand>
</feature>
<feature type="binding site" evidence="2">
    <location>
        <position position="174"/>
    </location>
    <ligand>
        <name>substrate</name>
    </ligand>
</feature>
<feature type="binding site" evidence="2">
    <location>
        <position position="206"/>
    </location>
    <ligand>
        <name>substrate</name>
    </ligand>
</feature>
<reference key="1">
    <citation type="journal article" date="2004" name="Nat. Biotechnol.">
        <title>Complete genome sequence of the metabolically versatile photosynthetic bacterium Rhodopseudomonas palustris.</title>
        <authorList>
            <person name="Larimer F.W."/>
            <person name="Chain P."/>
            <person name="Hauser L."/>
            <person name="Lamerdin J.E."/>
            <person name="Malfatti S."/>
            <person name="Do L."/>
            <person name="Land M.L."/>
            <person name="Pelletier D.A."/>
            <person name="Beatty J.T."/>
            <person name="Lang A.S."/>
            <person name="Tabita F.R."/>
            <person name="Gibson J.L."/>
            <person name="Hanson T.E."/>
            <person name="Bobst C."/>
            <person name="Torres y Torres J.L."/>
            <person name="Peres C."/>
            <person name="Harrison F.H."/>
            <person name="Gibson J."/>
            <person name="Harwood C.S."/>
        </authorList>
    </citation>
    <scope>NUCLEOTIDE SEQUENCE [LARGE SCALE GENOMIC DNA]</scope>
    <source>
        <strain>ATCC BAA-98 / CGA009</strain>
    </source>
</reference>
<protein>
    <recommendedName>
        <fullName evidence="2">tRNA (guanine-N(7)-)-methyltransferase</fullName>
        <ecNumber evidence="2">2.1.1.33</ecNumber>
    </recommendedName>
    <alternativeName>
        <fullName evidence="2">tRNA (guanine(46)-N(7))-methyltransferase</fullName>
    </alternativeName>
    <alternativeName>
        <fullName evidence="2">tRNA(m7G46)-methyltransferase</fullName>
    </alternativeName>
</protein>
<name>TRMB_RHOPA</name>
<accession>Q6NCM9</accession>
<comment type="function">
    <text evidence="2">Catalyzes the formation of N(7)-methylguanine at position 46 (m7G46) in tRNA.</text>
</comment>
<comment type="catalytic activity">
    <reaction evidence="2">
        <text>guanosine(46) in tRNA + S-adenosyl-L-methionine = N(7)-methylguanosine(46) in tRNA + S-adenosyl-L-homocysteine</text>
        <dbReference type="Rhea" id="RHEA:42708"/>
        <dbReference type="Rhea" id="RHEA-COMP:10188"/>
        <dbReference type="Rhea" id="RHEA-COMP:10189"/>
        <dbReference type="ChEBI" id="CHEBI:57856"/>
        <dbReference type="ChEBI" id="CHEBI:59789"/>
        <dbReference type="ChEBI" id="CHEBI:74269"/>
        <dbReference type="ChEBI" id="CHEBI:74480"/>
        <dbReference type="EC" id="2.1.1.33"/>
    </reaction>
</comment>
<comment type="pathway">
    <text evidence="2">tRNA modification; N(7)-methylguanine-tRNA biosynthesis.</text>
</comment>
<comment type="similarity">
    <text evidence="2">Belongs to the class I-like SAM-binding methyltransferase superfamily. TrmB family.</text>
</comment>
<evidence type="ECO:0000250" key="1"/>
<evidence type="ECO:0000255" key="2">
    <source>
        <dbReference type="HAMAP-Rule" id="MF_01057"/>
    </source>
</evidence>